<reference key="1">
    <citation type="journal article" date="2002" name="Environ. Microbiol.">
        <title>Complete genome sequence and comparative analysis of the metabolically versatile Pseudomonas putida KT2440.</title>
        <authorList>
            <person name="Nelson K.E."/>
            <person name="Weinel C."/>
            <person name="Paulsen I.T."/>
            <person name="Dodson R.J."/>
            <person name="Hilbert H."/>
            <person name="Martins dos Santos V.A.P."/>
            <person name="Fouts D.E."/>
            <person name="Gill S.R."/>
            <person name="Pop M."/>
            <person name="Holmes M."/>
            <person name="Brinkac L.M."/>
            <person name="Beanan M.J."/>
            <person name="DeBoy R.T."/>
            <person name="Daugherty S.C."/>
            <person name="Kolonay J.F."/>
            <person name="Madupu R."/>
            <person name="Nelson W.C."/>
            <person name="White O."/>
            <person name="Peterson J.D."/>
            <person name="Khouri H.M."/>
            <person name="Hance I."/>
            <person name="Chris Lee P."/>
            <person name="Holtzapple E.K."/>
            <person name="Scanlan D."/>
            <person name="Tran K."/>
            <person name="Moazzez A."/>
            <person name="Utterback T.R."/>
            <person name="Rizzo M."/>
            <person name="Lee K."/>
            <person name="Kosack D."/>
            <person name="Moestl D."/>
            <person name="Wedler H."/>
            <person name="Lauber J."/>
            <person name="Stjepandic D."/>
            <person name="Hoheisel J."/>
            <person name="Straetz M."/>
            <person name="Heim S."/>
            <person name="Kiewitz C."/>
            <person name="Eisen J.A."/>
            <person name="Timmis K.N."/>
            <person name="Duesterhoeft A."/>
            <person name="Tuemmler B."/>
            <person name="Fraser C.M."/>
        </authorList>
    </citation>
    <scope>NUCLEOTIDE SEQUENCE [LARGE SCALE GENOMIC DNA]</scope>
    <source>
        <strain>ATCC 47054 / DSM 6125 / CFBP 8728 / NCIMB 11950 / KT2440</strain>
    </source>
</reference>
<comment type="function">
    <text evidence="1">DNA-dependent RNA polymerase catalyzes the transcription of DNA into RNA using the four ribonucleoside triphosphates as substrates.</text>
</comment>
<comment type="catalytic activity">
    <reaction evidence="1">
        <text>RNA(n) + a ribonucleoside 5'-triphosphate = RNA(n+1) + diphosphate</text>
        <dbReference type="Rhea" id="RHEA:21248"/>
        <dbReference type="Rhea" id="RHEA-COMP:14527"/>
        <dbReference type="Rhea" id="RHEA-COMP:17342"/>
        <dbReference type="ChEBI" id="CHEBI:33019"/>
        <dbReference type="ChEBI" id="CHEBI:61557"/>
        <dbReference type="ChEBI" id="CHEBI:140395"/>
        <dbReference type="EC" id="2.7.7.6"/>
    </reaction>
</comment>
<comment type="subunit">
    <text evidence="1">The RNAP catalytic core consists of 2 alpha, 1 beta, 1 beta' and 1 omega subunit. When a sigma factor is associated with the core the holoenzyme is formed, which can initiate transcription.</text>
</comment>
<comment type="similarity">
    <text evidence="1">Belongs to the RNA polymerase beta chain family.</text>
</comment>
<keyword id="KW-0240">DNA-directed RNA polymerase</keyword>
<keyword id="KW-0548">Nucleotidyltransferase</keyword>
<keyword id="KW-1185">Reference proteome</keyword>
<keyword id="KW-0804">Transcription</keyword>
<keyword id="KW-0808">Transferase</keyword>
<proteinExistence type="inferred from homology"/>
<accession>Q88QP2</accession>
<sequence>MAYSYTEKKRIRKDFSKLPDVMDVPYLLAIQLDSYREFLQAGASKDHFRDVGLHAAFKSVFPIISYSGNAALEYVGYRLGEPAFDVKECVLRGVTFAVPLRVKVRLIIFDKESSNKAIKDIKEQEVYMGEIPLMTENGTFVINGTERVIVSQLHRSPGVFFDHDRGKTHSSGKLLYSARIIPYRGSWLDFEFDPKDCVFVRIDRRRKLPASVLLRALGYSTEEVLNTFYTTNVFHISGEKLSLELVPQRLRGEVAVMDIHDETGKVIVEQGRRITARHINQLEKAGVKQLDVPMEYVLGRTTAKAIVHPATGEILAECNTEMTTELLIKVAKAQVVRIETLYTNDIDCGPFISDTLKIDTTSNQLEALVEIYRMMRPGEPPTKDAAETLFNNLFFSAERYDLSAVGRMKFNRRIGRTEIEGSGVLSKEDIVEVLKTLVDIRNGKGIVDDIDHLGNRRVRCVGEMAENQFRVGLVRVERAVKERLSMAESEGLMPQDLINAKPVAAAVKEFFGSSQLSQFMDQNNPLSEITHKRRVSALGPGGLTRERAGFEVRDVHPTHYGRVCPIETPEGPNIGLINSLAAYARTNQYGFLESPYRVVKEGVVSDDIVFLSAIEEADHVIAQASAAMNDKKQLIDELVAVRHLNEFTVKAPEDVTLMDVSPKQVVSVAASLIPFLEHDDANRALMGSNMQRQAVPTLRADKPLVGTGMERNVARDSGVCVVARRGGVIDSVDASRIVVRVADDEVETGEAGVDIYNLTKYTRSNQNTCINQRPLVSKGDKVQRGDIMADGPSTDMGELALGQNMRIAFMAWNGFNFEDSICLSERVVQEDRFTTIHIQELTCVARDTKLGPEEITADIPNVGEAALNKLDEAGIVYVGAEVGAGDILVGKVTPKGETQLTPEEKLLRAIFGEKASDVKDTSLRVPTGTKGTVIDVQVFTRDGVERDSRALAIEKMQLDEIRKDLNEEFRIVEGATFERLRSALNGQVVDGGAGLKKGTVITDEVLDGLEHGQWFKLRMAEDALNEQLEKAQQYIVDRRRLLDDKFEDKKRKLQQGDDLAPGVLKIVKVYLAIRRRIQPGDKMAGRHGNKGVVSVIMPVEDMPHDANGTPVDVVLNPLGVPSRMNVGQILETHLGLAAKGLGEKIDRMLEEQRKAAELRVFLTEVYNEIGGRQENLDEFTDEEILALANNLKKGVPMATPVFDGAKEREIKAMLKLADLPESGQMVLFDGRTGNKFERPVTVGYMYMLKLNHLVDDKMHARSTGSYSLVTQQPLGGKAQFGGQRFGEMEVWALEAYGAAYTLQEMLTVKSDDVNGRTKMYKNIVDGDHRMEPGMPESFNVLIKEIRSLGIDIDLETE</sequence>
<evidence type="ECO:0000255" key="1">
    <source>
        <dbReference type="HAMAP-Rule" id="MF_01321"/>
    </source>
</evidence>
<protein>
    <recommendedName>
        <fullName evidence="1">DNA-directed RNA polymerase subunit beta</fullName>
        <shortName evidence="1">RNAP subunit beta</shortName>
        <ecNumber evidence="1">2.7.7.6</ecNumber>
    </recommendedName>
    <alternativeName>
        <fullName evidence="1">RNA polymerase subunit beta</fullName>
    </alternativeName>
    <alternativeName>
        <fullName evidence="1">Transcriptase subunit beta</fullName>
    </alternativeName>
</protein>
<name>RPOB_PSEPK</name>
<dbReference type="EC" id="2.7.7.6" evidence="1"/>
<dbReference type="EMBL" id="AE015451">
    <property type="protein sequence ID" value="AAN66077.1"/>
    <property type="molecule type" value="Genomic_DNA"/>
</dbReference>
<dbReference type="RefSeq" id="NP_742613.1">
    <property type="nucleotide sequence ID" value="NC_002947.4"/>
</dbReference>
<dbReference type="RefSeq" id="WP_003255495.1">
    <property type="nucleotide sequence ID" value="NZ_CP169744.1"/>
</dbReference>
<dbReference type="SMR" id="Q88QP2"/>
<dbReference type="STRING" id="160488.PP_0447"/>
<dbReference type="PaxDb" id="160488-PP_0447"/>
<dbReference type="GeneID" id="83677745"/>
<dbReference type="KEGG" id="ppu:PP_0447"/>
<dbReference type="PATRIC" id="fig|160488.4.peg.479"/>
<dbReference type="eggNOG" id="COG0085">
    <property type="taxonomic scope" value="Bacteria"/>
</dbReference>
<dbReference type="HOGENOM" id="CLU_000524_4_0_6"/>
<dbReference type="OrthoDB" id="9803954at2"/>
<dbReference type="PhylomeDB" id="Q88QP2"/>
<dbReference type="BioCyc" id="PPUT160488:G1G01-492-MONOMER"/>
<dbReference type="Proteomes" id="UP000000556">
    <property type="component" value="Chromosome"/>
</dbReference>
<dbReference type="GO" id="GO:0000428">
    <property type="term" value="C:DNA-directed RNA polymerase complex"/>
    <property type="evidence" value="ECO:0007669"/>
    <property type="project" value="UniProtKB-KW"/>
</dbReference>
<dbReference type="GO" id="GO:0003677">
    <property type="term" value="F:DNA binding"/>
    <property type="evidence" value="ECO:0007669"/>
    <property type="project" value="UniProtKB-UniRule"/>
</dbReference>
<dbReference type="GO" id="GO:0003899">
    <property type="term" value="F:DNA-directed RNA polymerase activity"/>
    <property type="evidence" value="ECO:0007669"/>
    <property type="project" value="UniProtKB-UniRule"/>
</dbReference>
<dbReference type="GO" id="GO:0032549">
    <property type="term" value="F:ribonucleoside binding"/>
    <property type="evidence" value="ECO:0007669"/>
    <property type="project" value="InterPro"/>
</dbReference>
<dbReference type="GO" id="GO:0006351">
    <property type="term" value="P:DNA-templated transcription"/>
    <property type="evidence" value="ECO:0007669"/>
    <property type="project" value="UniProtKB-UniRule"/>
</dbReference>
<dbReference type="CDD" id="cd00653">
    <property type="entry name" value="RNA_pol_B_RPB2"/>
    <property type="match status" value="1"/>
</dbReference>
<dbReference type="FunFam" id="2.40.50.100:FF:000006">
    <property type="entry name" value="DNA-directed RNA polymerase subunit beta"/>
    <property type="match status" value="1"/>
</dbReference>
<dbReference type="FunFam" id="2.40.50.150:FF:000001">
    <property type="entry name" value="DNA-directed RNA polymerase subunit beta"/>
    <property type="match status" value="1"/>
</dbReference>
<dbReference type="FunFam" id="3.90.1110.10:FF:000001">
    <property type="entry name" value="DNA-directed RNA polymerase subunit beta"/>
    <property type="match status" value="1"/>
</dbReference>
<dbReference type="FunFam" id="3.90.1110.10:FF:000004">
    <property type="entry name" value="DNA-directed RNA polymerase subunit beta"/>
    <property type="match status" value="1"/>
</dbReference>
<dbReference type="FunFam" id="3.90.1800.10:FF:000001">
    <property type="entry name" value="DNA-directed RNA polymerase subunit beta"/>
    <property type="match status" value="1"/>
</dbReference>
<dbReference type="Gene3D" id="2.40.50.100">
    <property type="match status" value="1"/>
</dbReference>
<dbReference type="Gene3D" id="2.40.50.150">
    <property type="match status" value="1"/>
</dbReference>
<dbReference type="Gene3D" id="3.90.1100.10">
    <property type="match status" value="2"/>
</dbReference>
<dbReference type="Gene3D" id="2.30.150.10">
    <property type="entry name" value="DNA-directed RNA polymerase, beta subunit, external 1 domain"/>
    <property type="match status" value="1"/>
</dbReference>
<dbReference type="Gene3D" id="2.40.270.10">
    <property type="entry name" value="DNA-directed RNA polymerase, subunit 2, domain 6"/>
    <property type="match status" value="1"/>
</dbReference>
<dbReference type="Gene3D" id="3.90.1800.10">
    <property type="entry name" value="RNA polymerase alpha subunit dimerisation domain"/>
    <property type="match status" value="1"/>
</dbReference>
<dbReference type="Gene3D" id="3.90.1110.10">
    <property type="entry name" value="RNA polymerase Rpb2, domain 2"/>
    <property type="match status" value="1"/>
</dbReference>
<dbReference type="HAMAP" id="MF_01321">
    <property type="entry name" value="RNApol_bact_RpoB"/>
    <property type="match status" value="1"/>
</dbReference>
<dbReference type="InterPro" id="IPR042107">
    <property type="entry name" value="DNA-dir_RNA_pol_bsu_ext_1_sf"/>
</dbReference>
<dbReference type="InterPro" id="IPR019462">
    <property type="entry name" value="DNA-dir_RNA_pol_bsu_external_1"/>
</dbReference>
<dbReference type="InterPro" id="IPR015712">
    <property type="entry name" value="DNA-dir_RNA_pol_su2"/>
</dbReference>
<dbReference type="InterPro" id="IPR007120">
    <property type="entry name" value="DNA-dir_RNAP_su2_dom"/>
</dbReference>
<dbReference type="InterPro" id="IPR037033">
    <property type="entry name" value="DNA-dir_RNAP_su2_hyb_sf"/>
</dbReference>
<dbReference type="InterPro" id="IPR010243">
    <property type="entry name" value="RNA_pol_bsu_bac"/>
</dbReference>
<dbReference type="InterPro" id="IPR007121">
    <property type="entry name" value="RNA_pol_bsu_CS"/>
</dbReference>
<dbReference type="InterPro" id="IPR007644">
    <property type="entry name" value="RNA_pol_bsu_protrusion"/>
</dbReference>
<dbReference type="InterPro" id="IPR007642">
    <property type="entry name" value="RNA_pol_Rpb2_2"/>
</dbReference>
<dbReference type="InterPro" id="IPR037034">
    <property type="entry name" value="RNA_pol_Rpb2_2_sf"/>
</dbReference>
<dbReference type="InterPro" id="IPR007645">
    <property type="entry name" value="RNA_pol_Rpb2_3"/>
</dbReference>
<dbReference type="InterPro" id="IPR007641">
    <property type="entry name" value="RNA_pol_Rpb2_7"/>
</dbReference>
<dbReference type="InterPro" id="IPR014724">
    <property type="entry name" value="RNA_pol_RPB2_OB-fold"/>
</dbReference>
<dbReference type="NCBIfam" id="NF001616">
    <property type="entry name" value="PRK00405.1"/>
    <property type="match status" value="1"/>
</dbReference>
<dbReference type="NCBIfam" id="TIGR02013">
    <property type="entry name" value="rpoB"/>
    <property type="match status" value="1"/>
</dbReference>
<dbReference type="PANTHER" id="PTHR20856">
    <property type="entry name" value="DNA-DIRECTED RNA POLYMERASE I SUBUNIT 2"/>
    <property type="match status" value="1"/>
</dbReference>
<dbReference type="Pfam" id="PF04563">
    <property type="entry name" value="RNA_pol_Rpb2_1"/>
    <property type="match status" value="1"/>
</dbReference>
<dbReference type="Pfam" id="PF04561">
    <property type="entry name" value="RNA_pol_Rpb2_2"/>
    <property type="match status" value="2"/>
</dbReference>
<dbReference type="Pfam" id="PF04565">
    <property type="entry name" value="RNA_pol_Rpb2_3"/>
    <property type="match status" value="1"/>
</dbReference>
<dbReference type="Pfam" id="PF10385">
    <property type="entry name" value="RNA_pol_Rpb2_45"/>
    <property type="match status" value="1"/>
</dbReference>
<dbReference type="Pfam" id="PF00562">
    <property type="entry name" value="RNA_pol_Rpb2_6"/>
    <property type="match status" value="1"/>
</dbReference>
<dbReference type="Pfam" id="PF04560">
    <property type="entry name" value="RNA_pol_Rpb2_7"/>
    <property type="match status" value="1"/>
</dbReference>
<dbReference type="SUPFAM" id="SSF64484">
    <property type="entry name" value="beta and beta-prime subunits of DNA dependent RNA-polymerase"/>
    <property type="match status" value="1"/>
</dbReference>
<dbReference type="PROSITE" id="PS01166">
    <property type="entry name" value="RNA_POL_BETA"/>
    <property type="match status" value="1"/>
</dbReference>
<gene>
    <name evidence="1" type="primary">rpoB</name>
    <name type="ordered locus">PP_0447</name>
</gene>
<feature type="chain" id="PRO_0000047941" description="DNA-directed RNA polymerase subunit beta">
    <location>
        <begin position="1"/>
        <end position="1357"/>
    </location>
</feature>
<organism>
    <name type="scientific">Pseudomonas putida (strain ATCC 47054 / DSM 6125 / CFBP 8728 / NCIMB 11950 / KT2440)</name>
    <dbReference type="NCBI Taxonomy" id="160488"/>
    <lineage>
        <taxon>Bacteria</taxon>
        <taxon>Pseudomonadati</taxon>
        <taxon>Pseudomonadota</taxon>
        <taxon>Gammaproteobacteria</taxon>
        <taxon>Pseudomonadales</taxon>
        <taxon>Pseudomonadaceae</taxon>
        <taxon>Pseudomonas</taxon>
    </lineage>
</organism>